<proteinExistence type="inferred from homology"/>
<name>CYAY_CHRVO</name>
<accession>Q7P221</accession>
<sequence>MTESEFLQLSDDIFDRIEQAIDEHGLDADTLRQGNVLEIEFDSGDKVIVNRHAVNQEMWIAAKSGGYHFSRRGEAWIASRDGAEFYATLAEAIRAGSGEAFDFAG</sequence>
<comment type="function">
    <text evidence="1">Involved in iron-sulfur (Fe-S) cluster assembly. May act as a regulator of Fe-S biogenesis.</text>
</comment>
<comment type="similarity">
    <text evidence="1">Belongs to the frataxin family.</text>
</comment>
<gene>
    <name evidence="1" type="primary">cyaY</name>
    <name type="ordered locus">CV_0040</name>
</gene>
<evidence type="ECO:0000255" key="1">
    <source>
        <dbReference type="HAMAP-Rule" id="MF_00142"/>
    </source>
</evidence>
<organism>
    <name type="scientific">Chromobacterium violaceum (strain ATCC 12472 / DSM 30191 / JCM 1249 / CCUG 213 / NBRC 12614 / NCIMB 9131 / NCTC 9757 / MK)</name>
    <dbReference type="NCBI Taxonomy" id="243365"/>
    <lineage>
        <taxon>Bacteria</taxon>
        <taxon>Pseudomonadati</taxon>
        <taxon>Pseudomonadota</taxon>
        <taxon>Betaproteobacteria</taxon>
        <taxon>Neisseriales</taxon>
        <taxon>Chromobacteriaceae</taxon>
        <taxon>Chromobacterium</taxon>
    </lineage>
</organism>
<dbReference type="EMBL" id="AE016825">
    <property type="protein sequence ID" value="AAQ57720.1"/>
    <property type="molecule type" value="Genomic_DNA"/>
</dbReference>
<dbReference type="RefSeq" id="WP_011133595.1">
    <property type="nucleotide sequence ID" value="NC_005085.1"/>
</dbReference>
<dbReference type="SMR" id="Q7P221"/>
<dbReference type="STRING" id="243365.CV_0040"/>
<dbReference type="GeneID" id="66366065"/>
<dbReference type="KEGG" id="cvi:CV_0040"/>
<dbReference type="eggNOG" id="COG1965">
    <property type="taxonomic scope" value="Bacteria"/>
</dbReference>
<dbReference type="HOGENOM" id="CLU_080880_3_0_4"/>
<dbReference type="OrthoDB" id="285675at2"/>
<dbReference type="Proteomes" id="UP000001424">
    <property type="component" value="Chromosome"/>
</dbReference>
<dbReference type="GO" id="GO:0005737">
    <property type="term" value="C:cytoplasm"/>
    <property type="evidence" value="ECO:0007669"/>
    <property type="project" value="UniProtKB-ARBA"/>
</dbReference>
<dbReference type="GO" id="GO:0008199">
    <property type="term" value="F:ferric iron binding"/>
    <property type="evidence" value="ECO:0007669"/>
    <property type="project" value="InterPro"/>
</dbReference>
<dbReference type="GO" id="GO:0016226">
    <property type="term" value="P:iron-sulfur cluster assembly"/>
    <property type="evidence" value="ECO:0007669"/>
    <property type="project" value="UniProtKB-UniRule"/>
</dbReference>
<dbReference type="Gene3D" id="3.30.920.10">
    <property type="entry name" value="Frataxin/CyaY"/>
    <property type="match status" value="1"/>
</dbReference>
<dbReference type="HAMAP" id="MF_00142">
    <property type="entry name" value="CyaY"/>
    <property type="match status" value="1"/>
</dbReference>
<dbReference type="InterPro" id="IPR047584">
    <property type="entry name" value="CyaY"/>
</dbReference>
<dbReference type="InterPro" id="IPR002908">
    <property type="entry name" value="Frataxin/CyaY"/>
</dbReference>
<dbReference type="InterPro" id="IPR036524">
    <property type="entry name" value="Frataxin/CyaY_sf"/>
</dbReference>
<dbReference type="InterPro" id="IPR020895">
    <property type="entry name" value="Frataxin_CS"/>
</dbReference>
<dbReference type="NCBIfam" id="TIGR03421">
    <property type="entry name" value="FeS_CyaY"/>
    <property type="match status" value="1"/>
</dbReference>
<dbReference type="Pfam" id="PF01491">
    <property type="entry name" value="Frataxin_Cyay"/>
    <property type="match status" value="1"/>
</dbReference>
<dbReference type="SMART" id="SM01219">
    <property type="entry name" value="Frataxin_Cyay"/>
    <property type="match status" value="1"/>
</dbReference>
<dbReference type="SUPFAM" id="SSF55387">
    <property type="entry name" value="Frataxin/Nqo15-like"/>
    <property type="match status" value="1"/>
</dbReference>
<dbReference type="PROSITE" id="PS01344">
    <property type="entry name" value="FRATAXIN_1"/>
    <property type="match status" value="1"/>
</dbReference>
<dbReference type="PROSITE" id="PS50810">
    <property type="entry name" value="FRATAXIN_2"/>
    <property type="match status" value="1"/>
</dbReference>
<protein>
    <recommendedName>
        <fullName evidence="1">Iron-sulfur cluster assembly protein CyaY</fullName>
    </recommendedName>
</protein>
<reference key="1">
    <citation type="journal article" date="2003" name="Proc. Natl. Acad. Sci. U.S.A.">
        <title>The complete genome sequence of Chromobacterium violaceum reveals remarkable and exploitable bacterial adaptability.</title>
        <authorList>
            <person name="Vasconcelos A.T.R."/>
            <person name="de Almeida D.F."/>
            <person name="Hungria M."/>
            <person name="Guimaraes C.T."/>
            <person name="Antonio R.V."/>
            <person name="Almeida F.C."/>
            <person name="de Almeida L.G.P."/>
            <person name="de Almeida R."/>
            <person name="Alves-Gomes J.A."/>
            <person name="Andrade E.M."/>
            <person name="Araripe J."/>
            <person name="de Araujo M.F.F."/>
            <person name="Astolfi-Filho S."/>
            <person name="Azevedo V."/>
            <person name="Baptista A.J."/>
            <person name="Bataus L.A.M."/>
            <person name="Batista J.S."/>
            <person name="Belo A."/>
            <person name="van den Berg C."/>
            <person name="Bogo M."/>
            <person name="Bonatto S."/>
            <person name="Bordignon J."/>
            <person name="Brigido M.M."/>
            <person name="Brito C.A."/>
            <person name="Brocchi M."/>
            <person name="Burity H.A."/>
            <person name="Camargo A.A."/>
            <person name="Cardoso D.D.P."/>
            <person name="Carneiro N.P."/>
            <person name="Carraro D.M."/>
            <person name="Carvalho C.M.B."/>
            <person name="Cascardo J.C.M."/>
            <person name="Cavada B.S."/>
            <person name="Chueire L.M.O."/>
            <person name="Creczynski-Pasa T.B."/>
            <person name="Cunha-Junior N.C."/>
            <person name="Fagundes N."/>
            <person name="Falcao C.L."/>
            <person name="Fantinatti F."/>
            <person name="Farias I.P."/>
            <person name="Felipe M.S.S."/>
            <person name="Ferrari L.P."/>
            <person name="Ferro J.A."/>
            <person name="Ferro M.I.T."/>
            <person name="Franco G.R."/>
            <person name="Freitas N.S.A."/>
            <person name="Furlan L.R."/>
            <person name="Gazzinelli R.T."/>
            <person name="Gomes E.A."/>
            <person name="Goncalves P.R."/>
            <person name="Grangeiro T.B."/>
            <person name="Grattapaglia D."/>
            <person name="Grisard E.C."/>
            <person name="Hanna E.S."/>
            <person name="Jardim S.N."/>
            <person name="Laurino J."/>
            <person name="Leoi L.C.T."/>
            <person name="Lima L.F.A."/>
            <person name="Loureiro M.F."/>
            <person name="Lyra M.C.C.P."/>
            <person name="Madeira H.M.F."/>
            <person name="Manfio G.P."/>
            <person name="Maranhao A.Q."/>
            <person name="Martins W.S."/>
            <person name="di Mauro S.M.Z."/>
            <person name="de Medeiros S.R.B."/>
            <person name="Meissner R.V."/>
            <person name="Moreira M.A.M."/>
            <person name="Nascimento F.F."/>
            <person name="Nicolas M.F."/>
            <person name="Oliveira J.G."/>
            <person name="Oliveira S.C."/>
            <person name="Paixao R.F.C."/>
            <person name="Parente J.A."/>
            <person name="Pedrosa F.O."/>
            <person name="Pena S.D.J."/>
            <person name="Pereira J.O."/>
            <person name="Pereira M."/>
            <person name="Pinto L.S.R.C."/>
            <person name="Pinto L.S."/>
            <person name="Porto J.I.R."/>
            <person name="Potrich D.P."/>
            <person name="Ramalho-Neto C.E."/>
            <person name="Reis A.M.M."/>
            <person name="Rigo L.U."/>
            <person name="Rondinelli E."/>
            <person name="Santos E.B.P."/>
            <person name="Santos F.R."/>
            <person name="Schneider M.P.C."/>
            <person name="Seuanez H.N."/>
            <person name="Silva A.M.R."/>
            <person name="da Silva A.L.C."/>
            <person name="Silva D.W."/>
            <person name="Silva R."/>
            <person name="Simoes I.C."/>
            <person name="Simon D."/>
            <person name="Soares C.M.A."/>
            <person name="Soares R.B.A."/>
            <person name="Souza E.M."/>
            <person name="Souza K.R.L."/>
            <person name="Souza R.C."/>
            <person name="Steffens M.B.R."/>
            <person name="Steindel M."/>
            <person name="Teixeira S.R."/>
            <person name="Urmenyi T."/>
            <person name="Vettore A."/>
            <person name="Wassem R."/>
            <person name="Zaha A."/>
            <person name="Simpson A.J.G."/>
        </authorList>
    </citation>
    <scope>NUCLEOTIDE SEQUENCE [LARGE SCALE GENOMIC DNA]</scope>
    <source>
        <strain>ATCC 12472 / DSM 30191 / JCM 1249 / CCUG 213 / NBRC 12614 / NCIMB 9131 / NCTC 9757 / MK</strain>
    </source>
</reference>
<feature type="chain" id="PRO_0000193935" description="Iron-sulfur cluster assembly protein CyaY">
    <location>
        <begin position="1"/>
        <end position="105"/>
    </location>
</feature>
<keyword id="KW-0408">Iron</keyword>
<keyword id="KW-0479">Metal-binding</keyword>
<keyword id="KW-1185">Reference proteome</keyword>